<comment type="subcellular location">
    <subcellularLocation>
        <location evidence="1">Cell membrane</location>
        <topology evidence="1">Multi-pass membrane protein</topology>
    </subcellularLocation>
</comment>
<comment type="similarity">
    <text evidence="1">Belongs to the UPF0316 family.</text>
</comment>
<name>Y1484_STACT</name>
<organism>
    <name type="scientific">Staphylococcus carnosus (strain TM300)</name>
    <dbReference type="NCBI Taxonomy" id="396513"/>
    <lineage>
        <taxon>Bacteria</taxon>
        <taxon>Bacillati</taxon>
        <taxon>Bacillota</taxon>
        <taxon>Bacilli</taxon>
        <taxon>Bacillales</taxon>
        <taxon>Staphylococcaceae</taxon>
        <taxon>Staphylococcus</taxon>
    </lineage>
</organism>
<keyword id="KW-1003">Cell membrane</keyword>
<keyword id="KW-0472">Membrane</keyword>
<keyword id="KW-1185">Reference proteome</keyword>
<keyword id="KW-0812">Transmembrane</keyword>
<keyword id="KW-1133">Transmembrane helix</keyword>
<gene>
    <name type="ordered locus">Sca_1484</name>
</gene>
<protein>
    <recommendedName>
        <fullName evidence="1">UPF0316 protein Sca_1484</fullName>
    </recommendedName>
</protein>
<feature type="chain" id="PRO_1000185074" description="UPF0316 protein Sca_1484">
    <location>
        <begin position="1"/>
        <end position="189"/>
    </location>
</feature>
<feature type="transmembrane region" description="Helical" evidence="1">
    <location>
        <begin position="8"/>
        <end position="28"/>
    </location>
</feature>
<feature type="transmembrane region" description="Helical" evidence="1">
    <location>
        <begin position="40"/>
        <end position="60"/>
    </location>
</feature>
<feature type="transmembrane region" description="Helical" evidence="1">
    <location>
        <begin position="66"/>
        <end position="86"/>
    </location>
</feature>
<proteinExistence type="inferred from homology"/>
<reference key="1">
    <citation type="journal article" date="2009" name="Appl. Environ. Microbiol.">
        <title>Genome analysis of the meat starter culture bacterium Staphylococcus carnosus TM300.</title>
        <authorList>
            <person name="Rosenstein R."/>
            <person name="Nerz C."/>
            <person name="Biswas L."/>
            <person name="Resch A."/>
            <person name="Raddatz G."/>
            <person name="Schuster S.C."/>
            <person name="Goetz F."/>
        </authorList>
    </citation>
    <scope>NUCLEOTIDE SEQUENCE [LARGE SCALE GENOMIC DNA]</scope>
    <source>
        <strain>TM300</strain>
    </source>
</reference>
<sequence>MSVISANPWLMLLAIFVINVAYVTCLTVRTILTLKGYRYVAAAVSFIEVLIYIIGLGLVMANLDKFQNIIAYALGFSVGIIVGMKIEEKLALGYSVVNVTTANYELDLPTQLRNLGYGVTHFPAYGRDGERLVMQILTPRRFELKLMDTIKQIDEKAFVIAYEARTLHGGFWVKGVRSKKLKAYDTDEI</sequence>
<evidence type="ECO:0000255" key="1">
    <source>
        <dbReference type="HAMAP-Rule" id="MF_01515"/>
    </source>
</evidence>
<dbReference type="EMBL" id="AM295250">
    <property type="protein sequence ID" value="CAL28389.1"/>
    <property type="molecule type" value="Genomic_DNA"/>
</dbReference>
<dbReference type="RefSeq" id="WP_015900729.1">
    <property type="nucleotide sequence ID" value="NC_012121.1"/>
</dbReference>
<dbReference type="SMR" id="B9DMS4"/>
<dbReference type="KEGG" id="sca:SCA_1484"/>
<dbReference type="eggNOG" id="COG4843">
    <property type="taxonomic scope" value="Bacteria"/>
</dbReference>
<dbReference type="HOGENOM" id="CLU_106166_1_0_9"/>
<dbReference type="OrthoDB" id="48231at2"/>
<dbReference type="BioCyc" id="SCAR396513:SCA_RS07535-MONOMER"/>
<dbReference type="Proteomes" id="UP000000444">
    <property type="component" value="Chromosome"/>
</dbReference>
<dbReference type="GO" id="GO:0005886">
    <property type="term" value="C:plasma membrane"/>
    <property type="evidence" value="ECO:0007669"/>
    <property type="project" value="UniProtKB-SubCell"/>
</dbReference>
<dbReference type="CDD" id="cd16381">
    <property type="entry name" value="YitT_C_like_1"/>
    <property type="match status" value="1"/>
</dbReference>
<dbReference type="HAMAP" id="MF_01515">
    <property type="entry name" value="UPF0316"/>
    <property type="match status" value="1"/>
</dbReference>
<dbReference type="InterPro" id="IPR019264">
    <property type="entry name" value="DUF2179"/>
</dbReference>
<dbReference type="InterPro" id="IPR044035">
    <property type="entry name" value="DUF5698"/>
</dbReference>
<dbReference type="InterPro" id="IPR022930">
    <property type="entry name" value="UPF0316"/>
</dbReference>
<dbReference type="NCBIfam" id="NF003190">
    <property type="entry name" value="PRK04164.1-1"/>
    <property type="match status" value="1"/>
</dbReference>
<dbReference type="NCBIfam" id="NF003194">
    <property type="entry name" value="PRK04164.1-5"/>
    <property type="match status" value="1"/>
</dbReference>
<dbReference type="PANTHER" id="PTHR40060">
    <property type="entry name" value="UPF0316 PROTEIN YEBE"/>
    <property type="match status" value="1"/>
</dbReference>
<dbReference type="PANTHER" id="PTHR40060:SF1">
    <property type="entry name" value="UPF0316 PROTEIN YEBE"/>
    <property type="match status" value="1"/>
</dbReference>
<dbReference type="Pfam" id="PF10035">
    <property type="entry name" value="DUF2179"/>
    <property type="match status" value="1"/>
</dbReference>
<dbReference type="Pfam" id="PF18955">
    <property type="entry name" value="DUF5698"/>
    <property type="match status" value="1"/>
</dbReference>
<accession>B9DMS4</accession>